<accession>Q57T49</accession>
<dbReference type="EMBL" id="AE017220">
    <property type="protein sequence ID" value="AAX64112.1"/>
    <property type="molecule type" value="Genomic_DNA"/>
</dbReference>
<dbReference type="RefSeq" id="WP_001539046.1">
    <property type="nucleotide sequence ID" value="NC_006905.1"/>
</dbReference>
<dbReference type="SMR" id="Q57T49"/>
<dbReference type="KEGG" id="sec:SCH_0206"/>
<dbReference type="HOGENOM" id="CLU_038034_2_5_6"/>
<dbReference type="Proteomes" id="UP000000538">
    <property type="component" value="Chromosome"/>
</dbReference>
<dbReference type="GO" id="GO:0042597">
    <property type="term" value="C:periplasmic space"/>
    <property type="evidence" value="ECO:0007669"/>
    <property type="project" value="UniProtKB-SubCell"/>
</dbReference>
<dbReference type="GO" id="GO:0031419">
    <property type="term" value="F:cobalamin binding"/>
    <property type="evidence" value="ECO:0007669"/>
    <property type="project" value="InterPro"/>
</dbReference>
<dbReference type="GO" id="GO:0015889">
    <property type="term" value="P:cobalamin transport"/>
    <property type="evidence" value="ECO:0007669"/>
    <property type="project" value="UniProtKB-UniRule"/>
</dbReference>
<dbReference type="CDD" id="cd01144">
    <property type="entry name" value="BtuF"/>
    <property type="match status" value="1"/>
</dbReference>
<dbReference type="Gene3D" id="3.40.50.1980">
    <property type="entry name" value="Nitrogenase molybdenum iron protein domain"/>
    <property type="match status" value="2"/>
</dbReference>
<dbReference type="HAMAP" id="MF_01000">
    <property type="entry name" value="BtuF"/>
    <property type="match status" value="1"/>
</dbReference>
<dbReference type="InterPro" id="IPR050902">
    <property type="entry name" value="ABC_Transporter_SBP"/>
</dbReference>
<dbReference type="InterPro" id="IPR002491">
    <property type="entry name" value="ABC_transptr_periplasmic_BD"/>
</dbReference>
<dbReference type="InterPro" id="IPR023544">
    <property type="entry name" value="ABC_transptr_vit_B12-bd"/>
</dbReference>
<dbReference type="InterPro" id="IPR054828">
    <property type="entry name" value="Vit_B12_bind_prot"/>
</dbReference>
<dbReference type="NCBIfam" id="NF002894">
    <property type="entry name" value="PRK03379.1"/>
    <property type="match status" value="1"/>
</dbReference>
<dbReference type="NCBIfam" id="NF038402">
    <property type="entry name" value="TroA_like"/>
    <property type="match status" value="1"/>
</dbReference>
<dbReference type="PANTHER" id="PTHR30535:SF34">
    <property type="entry name" value="MOLYBDATE-BINDING PROTEIN MOLA"/>
    <property type="match status" value="1"/>
</dbReference>
<dbReference type="PANTHER" id="PTHR30535">
    <property type="entry name" value="VITAMIN B12-BINDING PROTEIN"/>
    <property type="match status" value="1"/>
</dbReference>
<dbReference type="Pfam" id="PF01497">
    <property type="entry name" value="Peripla_BP_2"/>
    <property type="match status" value="1"/>
</dbReference>
<dbReference type="SUPFAM" id="SSF53807">
    <property type="entry name" value="Helical backbone' metal receptor"/>
    <property type="match status" value="1"/>
</dbReference>
<dbReference type="PROSITE" id="PS50983">
    <property type="entry name" value="FE_B12_PBP"/>
    <property type="match status" value="1"/>
</dbReference>
<reference key="1">
    <citation type="journal article" date="2005" name="Nucleic Acids Res.">
        <title>The genome sequence of Salmonella enterica serovar Choleraesuis, a highly invasive and resistant zoonotic pathogen.</title>
        <authorList>
            <person name="Chiu C.-H."/>
            <person name="Tang P."/>
            <person name="Chu C."/>
            <person name="Hu S."/>
            <person name="Bao Q."/>
            <person name="Yu J."/>
            <person name="Chou Y.-Y."/>
            <person name="Wang H.-S."/>
            <person name="Lee Y.-S."/>
        </authorList>
    </citation>
    <scope>NUCLEOTIDE SEQUENCE [LARGE SCALE GENOMIC DNA]</scope>
    <source>
        <strain>SC-B67</strain>
    </source>
</reference>
<comment type="function">
    <text evidence="1">Part of the ABC transporter complex BtuCDF involved in vitamin B12 import. Binds vitamin B12 and delivers it to the periplasmic surface of BtuC.</text>
</comment>
<comment type="subunit">
    <text evidence="1">The complex is composed of two ATP-binding proteins (BtuD), two transmembrane proteins (BtuC) and a solute-binding protein (BtuF).</text>
</comment>
<comment type="subcellular location">
    <subcellularLocation>
        <location evidence="1">Periplasm</location>
    </subcellularLocation>
</comment>
<comment type="similarity">
    <text evidence="1">Belongs to the BtuF family.</text>
</comment>
<keyword id="KW-1015">Disulfide bond</keyword>
<keyword id="KW-0574">Periplasm</keyword>
<keyword id="KW-0732">Signal</keyword>
<keyword id="KW-0813">Transport</keyword>
<proteinExistence type="inferred from homology"/>
<sequence length="266" mass="29316">MVKQMFRALVALLLTLPVWLYAAPRVITLSPANTELAFAAGITPVGVSSYSDYPPEAQKIEQVSTWQGMNLERIVAMKPDLVVAWRGGNAERQVNQLTSLGIKVMWVDAVSIEQIADTLRQLAAWSPQPEKAQQAAQTLLNEYAALNAEYAGKAKKRVFLQFGMNPLFTSGKGSIQHQVLTTCGGENVFADSRVPWPQVSREQVLARHPQAIIVAGKAGEILKIEQYWGNLLKIPVIPLNSDWFERASPRIILAAKQLCNALSQVN</sequence>
<feature type="signal peptide" evidence="1">
    <location>
        <begin position="1"/>
        <end position="22"/>
    </location>
</feature>
<feature type="chain" id="PRO_0000003503" description="Vitamin B12-binding protein">
    <location>
        <begin position="23"/>
        <end position="266"/>
    </location>
</feature>
<feature type="domain" description="Fe/B12 periplasmic-binding" evidence="1">
    <location>
        <begin position="25"/>
        <end position="266"/>
    </location>
</feature>
<feature type="binding site" evidence="1">
    <location>
        <position position="50"/>
    </location>
    <ligand>
        <name>cyanocob(III)alamin</name>
        <dbReference type="ChEBI" id="CHEBI:17439"/>
    </ligand>
</feature>
<feature type="binding site" evidence="1">
    <location>
        <begin position="242"/>
        <end position="246"/>
    </location>
    <ligand>
        <name>cyanocob(III)alamin</name>
        <dbReference type="ChEBI" id="CHEBI:17439"/>
    </ligand>
</feature>
<feature type="site" description="Important for BtuC binding" evidence="1">
    <location>
        <position position="72"/>
    </location>
</feature>
<feature type="site" description="Important for BtuC binding" evidence="1">
    <location>
        <position position="202"/>
    </location>
</feature>
<feature type="disulfide bond" evidence="1">
    <location>
        <begin position="183"/>
        <end position="259"/>
    </location>
</feature>
<name>BTUF_SALCH</name>
<protein>
    <recommendedName>
        <fullName evidence="1">Vitamin B12-binding protein</fullName>
    </recommendedName>
</protein>
<gene>
    <name evidence="1" type="primary">btuF</name>
    <name type="ordered locus">SCH_0206</name>
</gene>
<evidence type="ECO:0000255" key="1">
    <source>
        <dbReference type="HAMAP-Rule" id="MF_01000"/>
    </source>
</evidence>
<organism>
    <name type="scientific">Salmonella choleraesuis (strain SC-B67)</name>
    <dbReference type="NCBI Taxonomy" id="321314"/>
    <lineage>
        <taxon>Bacteria</taxon>
        <taxon>Pseudomonadati</taxon>
        <taxon>Pseudomonadota</taxon>
        <taxon>Gammaproteobacteria</taxon>
        <taxon>Enterobacterales</taxon>
        <taxon>Enterobacteriaceae</taxon>
        <taxon>Salmonella</taxon>
    </lineage>
</organism>